<sequence length="478" mass="51262">MAQGQVQVHFSTTSPDIELPEGKQQLLVPTNVRRYGLSQILNSEAMLDTSSPIPFDFLINGTFLRTTLDEYLTANGLSSETTLNLQYVRSLIPPLYEASFEHDDWVSSVDVLSGSSAAGAWGKNSIVEGQERILSGSYDGLLRVWNKSGQAIATSAPASIGGHTSGVKAAKWLSARQVASAGLDRTIRIWNYSESEDHFSAQLKPTMELYGHTGSIDSIAVHGPSNRILSASADGQIGFWTSHKSSAPEVNTSLISGPSTKRRKITTSTSTPQRGPLSLMDCHNGPATAVIFNPQDPTVAYSASQDHTIKTLDITTSSIVDTRTLLNPILSLSALPGIGHQIIAAGTTARHIALIDPRASAATTQAMTLRGHTNFVSSIFADPDSNYGLVSAGHDGTCRVWDLRSTRQGTKDEGLGVVGEAVYIIERESRKDKTTKTVGGEGVKVFDVNWDKDVGIVSAGEDKMVQVNRGRGVTRPEN</sequence>
<organism>
    <name type="scientific">Botryotinia fuckeliana (strain B05.10)</name>
    <name type="common">Noble rot fungus</name>
    <name type="synonym">Botrytis cinerea</name>
    <dbReference type="NCBI Taxonomy" id="332648"/>
    <lineage>
        <taxon>Eukaryota</taxon>
        <taxon>Fungi</taxon>
        <taxon>Dikarya</taxon>
        <taxon>Ascomycota</taxon>
        <taxon>Pezizomycotina</taxon>
        <taxon>Leotiomycetes</taxon>
        <taxon>Helotiales</taxon>
        <taxon>Sclerotiniaceae</taxon>
        <taxon>Botrytis</taxon>
    </lineage>
</organism>
<gene>
    <name type="primary">ytm1</name>
    <name type="ORF">BC1G_06312</name>
    <name type="ORF">BCIN_06g06690</name>
</gene>
<name>YTM1_BOTFB</name>
<evidence type="ECO:0000255" key="1">
    <source>
        <dbReference type="HAMAP-Rule" id="MF_03029"/>
    </source>
</evidence>
<evidence type="ECO:0000256" key="2">
    <source>
        <dbReference type="SAM" id="MobiDB-lite"/>
    </source>
</evidence>
<comment type="function">
    <text evidence="1">Component of the NOP7 complex, which is required for maturation of the 25S and 5.8S ribosomal RNAs and formation of the 60S ribosome.</text>
</comment>
<comment type="subunit">
    <text evidence="1">Component of the NOP7 complex, composed of erb1, nop7 and ytm1. The complex is held together by erb1, which interacts with nop7 via its N-terminal domain and with ytm1 via a high-affinity interaction between the seven-bladed beta-propeller domains of the 2 proteins. The NOP7 complex associates with the 66S pre-ribosome. Interacts (via UBL domain) with MDN1 (via VWFA/MIDAS domain).</text>
</comment>
<comment type="subcellular location">
    <subcellularLocation>
        <location evidence="1">Nucleus</location>
        <location evidence="1">Nucleolus</location>
    </subcellularLocation>
    <subcellularLocation>
        <location evidence="1">Nucleus</location>
        <location evidence="1">Nucleoplasm</location>
    </subcellularLocation>
</comment>
<comment type="similarity">
    <text evidence="1">Belongs to the WD repeat WDR12/YTM1 family.</text>
</comment>
<keyword id="KW-0539">Nucleus</keyword>
<keyword id="KW-1185">Reference proteome</keyword>
<keyword id="KW-0677">Repeat</keyword>
<keyword id="KW-0690">Ribosome biogenesis</keyword>
<keyword id="KW-0698">rRNA processing</keyword>
<keyword id="KW-0853">WD repeat</keyword>
<proteinExistence type="inferred from homology"/>
<reference key="1">
    <citation type="journal article" date="2011" name="PLoS Genet.">
        <title>Genomic analysis of the necrotrophic fungal pathogens Sclerotinia sclerotiorum and Botrytis cinerea.</title>
        <authorList>
            <person name="Amselem J."/>
            <person name="Cuomo C.A."/>
            <person name="van Kan J.A.L."/>
            <person name="Viaud M."/>
            <person name="Benito E.P."/>
            <person name="Couloux A."/>
            <person name="Coutinho P.M."/>
            <person name="de Vries R.P."/>
            <person name="Dyer P.S."/>
            <person name="Fillinger S."/>
            <person name="Fournier E."/>
            <person name="Gout L."/>
            <person name="Hahn M."/>
            <person name="Kohn L."/>
            <person name="Lapalu N."/>
            <person name="Plummer K.M."/>
            <person name="Pradier J.-M."/>
            <person name="Quevillon E."/>
            <person name="Sharon A."/>
            <person name="Simon A."/>
            <person name="ten Have A."/>
            <person name="Tudzynski B."/>
            <person name="Tudzynski P."/>
            <person name="Wincker P."/>
            <person name="Andrew M."/>
            <person name="Anthouard V."/>
            <person name="Beever R.E."/>
            <person name="Beffa R."/>
            <person name="Benoit I."/>
            <person name="Bouzid O."/>
            <person name="Brault B."/>
            <person name="Chen Z."/>
            <person name="Choquer M."/>
            <person name="Collemare J."/>
            <person name="Cotton P."/>
            <person name="Danchin E.G."/>
            <person name="Da Silva C."/>
            <person name="Gautier A."/>
            <person name="Giraud C."/>
            <person name="Giraud T."/>
            <person name="Gonzalez C."/>
            <person name="Grossetete S."/>
            <person name="Gueldener U."/>
            <person name="Henrissat B."/>
            <person name="Howlett B.J."/>
            <person name="Kodira C."/>
            <person name="Kretschmer M."/>
            <person name="Lappartient A."/>
            <person name="Leroch M."/>
            <person name="Levis C."/>
            <person name="Mauceli E."/>
            <person name="Neuveglise C."/>
            <person name="Oeser B."/>
            <person name="Pearson M."/>
            <person name="Poulain J."/>
            <person name="Poussereau N."/>
            <person name="Quesneville H."/>
            <person name="Rascle C."/>
            <person name="Schumacher J."/>
            <person name="Segurens B."/>
            <person name="Sexton A."/>
            <person name="Silva E."/>
            <person name="Sirven C."/>
            <person name="Soanes D.M."/>
            <person name="Talbot N.J."/>
            <person name="Templeton M."/>
            <person name="Yandava C."/>
            <person name="Yarden O."/>
            <person name="Zeng Q."/>
            <person name="Rollins J.A."/>
            <person name="Lebrun M.-H."/>
            <person name="Dickman M."/>
        </authorList>
    </citation>
    <scope>NUCLEOTIDE SEQUENCE [LARGE SCALE GENOMIC DNA]</scope>
    <source>
        <strain>B05.10</strain>
    </source>
</reference>
<reference key="2">
    <citation type="journal article" date="2012" name="Eukaryot. Cell">
        <title>Genome update of Botrytis cinerea strains B05.10 and T4.</title>
        <authorList>
            <person name="Staats M."/>
            <person name="van Kan J.A.L."/>
        </authorList>
    </citation>
    <scope>NUCLEOTIDE SEQUENCE [LARGE SCALE GENOMIC DNA]</scope>
    <scope>GENOME REANNOTATION</scope>
    <source>
        <strain>B05.10</strain>
    </source>
</reference>
<reference key="3">
    <citation type="journal article" date="2017" name="Mol. Plant Pathol.">
        <title>A gapless genome sequence of the fungus Botrytis cinerea.</title>
        <authorList>
            <person name="van Kan J.A.L."/>
            <person name="Stassen J.H.M."/>
            <person name="Mosbach A."/>
            <person name="van der Lee T.A.J."/>
            <person name="Faino L."/>
            <person name="Farmer A.D."/>
            <person name="Papasotiriou D.G."/>
            <person name="Zhou S."/>
            <person name="Seidl M.F."/>
            <person name="Cottam E."/>
            <person name="Edel D."/>
            <person name="Hahn M."/>
            <person name="Schwartz D.C."/>
            <person name="Dietrich R.A."/>
            <person name="Widdison S."/>
            <person name="Scalliet G."/>
        </authorList>
    </citation>
    <scope>NUCLEOTIDE SEQUENCE [LARGE SCALE GENOMIC DNA]</scope>
    <scope>GENOME REANNOTATION</scope>
    <source>
        <strain>B05.10</strain>
    </source>
</reference>
<dbReference type="EMBL" id="CP009810">
    <property type="protein sequence ID" value="ATZ51252.1"/>
    <property type="molecule type" value="Genomic_DNA"/>
</dbReference>
<dbReference type="SMR" id="A6S0T8"/>
<dbReference type="EnsemblFungi" id="Bcin06g06690.1">
    <property type="protein sequence ID" value="Bcin06p06690.1"/>
    <property type="gene ID" value="Bcin06g06690"/>
</dbReference>
<dbReference type="GeneID" id="5435746"/>
<dbReference type="KEGG" id="bfu:BCIN_06g06690"/>
<dbReference type="VEuPathDB" id="FungiDB:Bcin06g06690"/>
<dbReference type="OMA" id="DHKYVEF"/>
<dbReference type="OrthoDB" id="10251381at2759"/>
<dbReference type="Proteomes" id="UP000001798">
    <property type="component" value="Chromosome bcin06"/>
</dbReference>
<dbReference type="GO" id="GO:0005654">
    <property type="term" value="C:nucleoplasm"/>
    <property type="evidence" value="ECO:0007669"/>
    <property type="project" value="UniProtKB-SubCell"/>
</dbReference>
<dbReference type="GO" id="GO:0070545">
    <property type="term" value="C:PeBoW complex"/>
    <property type="evidence" value="ECO:0007669"/>
    <property type="project" value="EnsemblFungi"/>
</dbReference>
<dbReference type="GO" id="GO:0030687">
    <property type="term" value="C:preribosome, large subunit precursor"/>
    <property type="evidence" value="ECO:0007669"/>
    <property type="project" value="UniProtKB-UniRule"/>
</dbReference>
<dbReference type="GO" id="GO:0043021">
    <property type="term" value="F:ribonucleoprotein complex binding"/>
    <property type="evidence" value="ECO:0007669"/>
    <property type="project" value="UniProtKB-UniRule"/>
</dbReference>
<dbReference type="GO" id="GO:0051276">
    <property type="term" value="P:chromosome organization"/>
    <property type="evidence" value="ECO:0007669"/>
    <property type="project" value="EnsemblFungi"/>
</dbReference>
<dbReference type="GO" id="GO:0000466">
    <property type="term" value="P:maturation of 5.8S rRNA from tricistronic rRNA transcript (SSU-rRNA, 5.8S rRNA, LSU-rRNA)"/>
    <property type="evidence" value="ECO:0007669"/>
    <property type="project" value="UniProtKB-UniRule"/>
</dbReference>
<dbReference type="GO" id="GO:0000463">
    <property type="term" value="P:maturation of LSU-rRNA from tricistronic rRNA transcript (SSU-rRNA, 5.8S rRNA, LSU-rRNA)"/>
    <property type="evidence" value="ECO:0007669"/>
    <property type="project" value="UniProtKB-UniRule"/>
</dbReference>
<dbReference type="GO" id="GO:0110136">
    <property type="term" value="P:protein-RNA complex remodeling"/>
    <property type="evidence" value="ECO:0007669"/>
    <property type="project" value="EnsemblFungi"/>
</dbReference>
<dbReference type="FunFam" id="2.130.10.10:FF:000593">
    <property type="entry name" value="Ribosome biogenesis protein ytm1"/>
    <property type="match status" value="1"/>
</dbReference>
<dbReference type="Gene3D" id="2.130.10.10">
    <property type="entry name" value="YVTN repeat-like/Quinoprotein amine dehydrogenase"/>
    <property type="match status" value="1"/>
</dbReference>
<dbReference type="HAMAP" id="MF_03029">
    <property type="entry name" value="WDR12"/>
    <property type="match status" value="1"/>
</dbReference>
<dbReference type="InterPro" id="IPR020472">
    <property type="entry name" value="G-protein_beta_WD-40_rep"/>
</dbReference>
<dbReference type="InterPro" id="IPR012972">
    <property type="entry name" value="NLE"/>
</dbReference>
<dbReference type="InterPro" id="IPR015943">
    <property type="entry name" value="WD40/YVTN_repeat-like_dom_sf"/>
</dbReference>
<dbReference type="InterPro" id="IPR019775">
    <property type="entry name" value="WD40_repeat_CS"/>
</dbReference>
<dbReference type="InterPro" id="IPR036322">
    <property type="entry name" value="WD40_repeat_dom_sf"/>
</dbReference>
<dbReference type="InterPro" id="IPR001680">
    <property type="entry name" value="WD40_rpt"/>
</dbReference>
<dbReference type="InterPro" id="IPR028599">
    <property type="entry name" value="WDR12/Ytm1"/>
</dbReference>
<dbReference type="PANTHER" id="PTHR19855:SF11">
    <property type="entry name" value="RIBOSOME BIOGENESIS PROTEIN WDR12"/>
    <property type="match status" value="1"/>
</dbReference>
<dbReference type="PANTHER" id="PTHR19855">
    <property type="entry name" value="WD40 REPEAT PROTEIN 12, 37"/>
    <property type="match status" value="1"/>
</dbReference>
<dbReference type="Pfam" id="PF08154">
    <property type="entry name" value="NLE"/>
    <property type="match status" value="1"/>
</dbReference>
<dbReference type="Pfam" id="PF00400">
    <property type="entry name" value="WD40"/>
    <property type="match status" value="5"/>
</dbReference>
<dbReference type="PRINTS" id="PR00320">
    <property type="entry name" value="GPROTEINBRPT"/>
</dbReference>
<dbReference type="SMART" id="SM00320">
    <property type="entry name" value="WD40"/>
    <property type="match status" value="6"/>
</dbReference>
<dbReference type="SUPFAM" id="SSF50978">
    <property type="entry name" value="WD40 repeat-like"/>
    <property type="match status" value="1"/>
</dbReference>
<dbReference type="PROSITE" id="PS00678">
    <property type="entry name" value="WD_REPEATS_1"/>
    <property type="match status" value="1"/>
</dbReference>
<dbReference type="PROSITE" id="PS50082">
    <property type="entry name" value="WD_REPEATS_2"/>
    <property type="match status" value="3"/>
</dbReference>
<dbReference type="PROSITE" id="PS50294">
    <property type="entry name" value="WD_REPEATS_REGION"/>
    <property type="match status" value="1"/>
</dbReference>
<protein>
    <recommendedName>
        <fullName evidence="1">Ribosome biogenesis protein ytm1</fullName>
    </recommendedName>
</protein>
<accession>A6S0T8</accession>
<accession>A0A384JL87</accession>
<feature type="chain" id="PRO_0000369580" description="Ribosome biogenesis protein ytm1">
    <location>
        <begin position="1"/>
        <end position="478"/>
    </location>
</feature>
<feature type="repeat" description="WD 1">
    <location>
        <begin position="111"/>
        <end position="155"/>
    </location>
</feature>
<feature type="repeat" description="WD 2">
    <location>
        <begin position="162"/>
        <end position="200"/>
    </location>
</feature>
<feature type="repeat" description="WD 3">
    <location>
        <begin position="211"/>
        <end position="250"/>
    </location>
</feature>
<feature type="repeat" description="WD 4">
    <location>
        <begin position="282"/>
        <end position="322"/>
    </location>
</feature>
<feature type="repeat" description="WD 5">
    <location>
        <begin position="371"/>
        <end position="411"/>
    </location>
</feature>
<feature type="repeat" description="WD 6">
    <location>
        <begin position="440"/>
        <end position="478"/>
    </location>
</feature>
<feature type="region of interest" description="Ubiquitin-like (UBL) domain" evidence="1">
    <location>
        <begin position="6"/>
        <end position="89"/>
    </location>
</feature>
<feature type="region of interest" description="Disordered" evidence="2">
    <location>
        <begin position="250"/>
        <end position="276"/>
    </location>
</feature>